<name>RNC_CLOK5</name>
<comment type="function">
    <text evidence="1">Digests double-stranded RNA. Involved in the processing of primary rRNA transcript to yield the immediate precursors to the large and small rRNAs (23S and 16S). Processes some mRNAs, and tRNAs when they are encoded in the rRNA operon. Processes pre-crRNA and tracrRNA of type II CRISPR loci if present in the organism.</text>
</comment>
<comment type="catalytic activity">
    <reaction evidence="1">
        <text>Endonucleolytic cleavage to 5'-phosphomonoester.</text>
        <dbReference type="EC" id="3.1.26.3"/>
    </reaction>
</comment>
<comment type="cofactor">
    <cofactor evidence="1">
        <name>Mg(2+)</name>
        <dbReference type="ChEBI" id="CHEBI:18420"/>
    </cofactor>
</comment>
<comment type="subunit">
    <text evidence="1">Homodimer.</text>
</comment>
<comment type="subcellular location">
    <subcellularLocation>
        <location evidence="1">Cytoplasm</location>
    </subcellularLocation>
</comment>
<comment type="similarity">
    <text evidence="1">Belongs to the ribonuclease III family.</text>
</comment>
<sequence>MEKVNFFEEVEKTLNISFNDKELIDTALTHSSYANGKKGVKFNERMEFLGDSVLQLCISEYLFLIYKSKSEGELTKKRSLIVCENSLYEVAKKWNIGKYIKMSKGEEITGGRERTSILANCVEAIIAAIYIDSGYKKTKQFIIDNFKDIIEKAIKNQIVLDYKTNLQEIVQQDGDIHIEYMLIKYEGPPHRRKFYTKVCVANNVMGSGVGYTKKESEQNAAQDALKKLKSEDKWNKEGIDTNEK</sequence>
<keyword id="KW-0963">Cytoplasm</keyword>
<keyword id="KW-0255">Endonuclease</keyword>
<keyword id="KW-0378">Hydrolase</keyword>
<keyword id="KW-0460">Magnesium</keyword>
<keyword id="KW-0479">Metal-binding</keyword>
<keyword id="KW-0507">mRNA processing</keyword>
<keyword id="KW-0540">Nuclease</keyword>
<keyword id="KW-1185">Reference proteome</keyword>
<keyword id="KW-0694">RNA-binding</keyword>
<keyword id="KW-0698">rRNA processing</keyword>
<keyword id="KW-0699">rRNA-binding</keyword>
<keyword id="KW-0819">tRNA processing</keyword>
<evidence type="ECO:0000255" key="1">
    <source>
        <dbReference type="HAMAP-Rule" id="MF_00104"/>
    </source>
</evidence>
<protein>
    <recommendedName>
        <fullName evidence="1">Ribonuclease 3</fullName>
        <ecNumber evidence="1">3.1.26.3</ecNumber>
    </recommendedName>
    <alternativeName>
        <fullName evidence="1">Ribonuclease III</fullName>
        <shortName evidence="1">RNase III</shortName>
    </alternativeName>
</protein>
<reference key="1">
    <citation type="journal article" date="2008" name="Proc. Natl. Acad. Sci. U.S.A.">
        <title>The genome of Clostridium kluyveri, a strict anaerobe with unique metabolic features.</title>
        <authorList>
            <person name="Seedorf H."/>
            <person name="Fricke W.F."/>
            <person name="Veith B."/>
            <person name="Brueggemann H."/>
            <person name="Liesegang H."/>
            <person name="Strittmatter A."/>
            <person name="Miethke M."/>
            <person name="Buckel W."/>
            <person name="Hinderberger J."/>
            <person name="Li F."/>
            <person name="Hagemeier C."/>
            <person name="Thauer R.K."/>
            <person name="Gottschalk G."/>
        </authorList>
    </citation>
    <scope>NUCLEOTIDE SEQUENCE [LARGE SCALE GENOMIC DNA]</scope>
    <source>
        <strain>ATCC 8527 / DSM 555 / NBRC 12016 / NCIMB 10680 / K1</strain>
    </source>
</reference>
<feature type="chain" id="PRO_1000075740" description="Ribonuclease 3">
    <location>
        <begin position="1"/>
        <end position="244"/>
    </location>
</feature>
<feature type="domain" description="RNase III" evidence="1">
    <location>
        <begin position="7"/>
        <end position="134"/>
    </location>
</feature>
<feature type="domain" description="DRBM" evidence="1">
    <location>
        <begin position="161"/>
        <end position="230"/>
    </location>
</feature>
<feature type="active site" evidence="1">
    <location>
        <position position="51"/>
    </location>
</feature>
<feature type="active site" evidence="1">
    <location>
        <position position="123"/>
    </location>
</feature>
<feature type="binding site" evidence="1">
    <location>
        <position position="47"/>
    </location>
    <ligand>
        <name>Mg(2+)</name>
        <dbReference type="ChEBI" id="CHEBI:18420"/>
    </ligand>
</feature>
<feature type="binding site" evidence="1">
    <location>
        <position position="120"/>
    </location>
    <ligand>
        <name>Mg(2+)</name>
        <dbReference type="ChEBI" id="CHEBI:18420"/>
    </ligand>
</feature>
<feature type="binding site" evidence="1">
    <location>
        <position position="123"/>
    </location>
    <ligand>
        <name>Mg(2+)</name>
        <dbReference type="ChEBI" id="CHEBI:18420"/>
    </ligand>
</feature>
<dbReference type="EC" id="3.1.26.3" evidence="1"/>
<dbReference type="EMBL" id="CP000673">
    <property type="protein sequence ID" value="EDK33438.1"/>
    <property type="molecule type" value="Genomic_DNA"/>
</dbReference>
<dbReference type="RefSeq" id="WP_012101785.1">
    <property type="nucleotide sequence ID" value="NC_009706.1"/>
</dbReference>
<dbReference type="SMR" id="A5N807"/>
<dbReference type="STRING" id="431943.CKL_1396"/>
<dbReference type="KEGG" id="ckl:CKL_1396"/>
<dbReference type="eggNOG" id="COG0571">
    <property type="taxonomic scope" value="Bacteria"/>
</dbReference>
<dbReference type="HOGENOM" id="CLU_000907_1_3_9"/>
<dbReference type="Proteomes" id="UP000002411">
    <property type="component" value="Chromosome"/>
</dbReference>
<dbReference type="GO" id="GO:0005737">
    <property type="term" value="C:cytoplasm"/>
    <property type="evidence" value="ECO:0007669"/>
    <property type="project" value="UniProtKB-SubCell"/>
</dbReference>
<dbReference type="GO" id="GO:0003725">
    <property type="term" value="F:double-stranded RNA binding"/>
    <property type="evidence" value="ECO:0007669"/>
    <property type="project" value="TreeGrafter"/>
</dbReference>
<dbReference type="GO" id="GO:0046872">
    <property type="term" value="F:metal ion binding"/>
    <property type="evidence" value="ECO:0007669"/>
    <property type="project" value="UniProtKB-KW"/>
</dbReference>
<dbReference type="GO" id="GO:0004525">
    <property type="term" value="F:ribonuclease III activity"/>
    <property type="evidence" value="ECO:0007669"/>
    <property type="project" value="UniProtKB-UniRule"/>
</dbReference>
<dbReference type="GO" id="GO:0019843">
    <property type="term" value="F:rRNA binding"/>
    <property type="evidence" value="ECO:0007669"/>
    <property type="project" value="UniProtKB-KW"/>
</dbReference>
<dbReference type="GO" id="GO:0006397">
    <property type="term" value="P:mRNA processing"/>
    <property type="evidence" value="ECO:0007669"/>
    <property type="project" value="UniProtKB-UniRule"/>
</dbReference>
<dbReference type="GO" id="GO:0010468">
    <property type="term" value="P:regulation of gene expression"/>
    <property type="evidence" value="ECO:0007669"/>
    <property type="project" value="TreeGrafter"/>
</dbReference>
<dbReference type="GO" id="GO:0006364">
    <property type="term" value="P:rRNA processing"/>
    <property type="evidence" value="ECO:0007669"/>
    <property type="project" value="UniProtKB-UniRule"/>
</dbReference>
<dbReference type="GO" id="GO:0008033">
    <property type="term" value="P:tRNA processing"/>
    <property type="evidence" value="ECO:0007669"/>
    <property type="project" value="UniProtKB-KW"/>
</dbReference>
<dbReference type="CDD" id="cd10845">
    <property type="entry name" value="DSRM_RNAse_III_family"/>
    <property type="match status" value="1"/>
</dbReference>
<dbReference type="CDD" id="cd00593">
    <property type="entry name" value="RIBOc"/>
    <property type="match status" value="1"/>
</dbReference>
<dbReference type="FunFam" id="1.10.1520.10:FF:000001">
    <property type="entry name" value="Ribonuclease 3"/>
    <property type="match status" value="1"/>
</dbReference>
<dbReference type="FunFam" id="3.30.160.20:FF:000003">
    <property type="entry name" value="Ribonuclease 3"/>
    <property type="match status" value="1"/>
</dbReference>
<dbReference type="Gene3D" id="3.30.160.20">
    <property type="match status" value="1"/>
</dbReference>
<dbReference type="Gene3D" id="1.10.1520.10">
    <property type="entry name" value="Ribonuclease III domain"/>
    <property type="match status" value="1"/>
</dbReference>
<dbReference type="HAMAP" id="MF_00104">
    <property type="entry name" value="RNase_III"/>
    <property type="match status" value="1"/>
</dbReference>
<dbReference type="InterPro" id="IPR014720">
    <property type="entry name" value="dsRBD_dom"/>
</dbReference>
<dbReference type="InterPro" id="IPR011907">
    <property type="entry name" value="RNase_III"/>
</dbReference>
<dbReference type="InterPro" id="IPR000999">
    <property type="entry name" value="RNase_III_dom"/>
</dbReference>
<dbReference type="InterPro" id="IPR036389">
    <property type="entry name" value="RNase_III_sf"/>
</dbReference>
<dbReference type="NCBIfam" id="TIGR02191">
    <property type="entry name" value="RNaseIII"/>
    <property type="match status" value="1"/>
</dbReference>
<dbReference type="PANTHER" id="PTHR11207:SF0">
    <property type="entry name" value="RIBONUCLEASE 3"/>
    <property type="match status" value="1"/>
</dbReference>
<dbReference type="PANTHER" id="PTHR11207">
    <property type="entry name" value="RIBONUCLEASE III"/>
    <property type="match status" value="1"/>
</dbReference>
<dbReference type="Pfam" id="PF00035">
    <property type="entry name" value="dsrm"/>
    <property type="match status" value="1"/>
</dbReference>
<dbReference type="Pfam" id="PF14622">
    <property type="entry name" value="Ribonucleas_3_3"/>
    <property type="match status" value="1"/>
</dbReference>
<dbReference type="SMART" id="SM00358">
    <property type="entry name" value="DSRM"/>
    <property type="match status" value="1"/>
</dbReference>
<dbReference type="SMART" id="SM00535">
    <property type="entry name" value="RIBOc"/>
    <property type="match status" value="1"/>
</dbReference>
<dbReference type="SUPFAM" id="SSF54768">
    <property type="entry name" value="dsRNA-binding domain-like"/>
    <property type="match status" value="1"/>
</dbReference>
<dbReference type="SUPFAM" id="SSF69065">
    <property type="entry name" value="RNase III domain-like"/>
    <property type="match status" value="1"/>
</dbReference>
<dbReference type="PROSITE" id="PS50137">
    <property type="entry name" value="DS_RBD"/>
    <property type="match status" value="1"/>
</dbReference>
<dbReference type="PROSITE" id="PS00517">
    <property type="entry name" value="RNASE_3_1"/>
    <property type="match status" value="1"/>
</dbReference>
<dbReference type="PROSITE" id="PS50142">
    <property type="entry name" value="RNASE_3_2"/>
    <property type="match status" value="1"/>
</dbReference>
<gene>
    <name evidence="1" type="primary">rnc</name>
    <name type="ordered locus">CKL_1396</name>
</gene>
<organism>
    <name type="scientific">Clostridium kluyveri (strain ATCC 8527 / DSM 555 / NBRC 12016 / NCIMB 10680 / K1)</name>
    <dbReference type="NCBI Taxonomy" id="431943"/>
    <lineage>
        <taxon>Bacteria</taxon>
        <taxon>Bacillati</taxon>
        <taxon>Bacillota</taxon>
        <taxon>Clostridia</taxon>
        <taxon>Eubacteriales</taxon>
        <taxon>Clostridiaceae</taxon>
        <taxon>Clostridium</taxon>
    </lineage>
</organism>
<proteinExistence type="inferred from homology"/>
<accession>A5N807</accession>